<organism>
    <name type="scientific">Shewanella piezotolerans (strain WP3 / JCM 13877)</name>
    <dbReference type="NCBI Taxonomy" id="225849"/>
    <lineage>
        <taxon>Bacteria</taxon>
        <taxon>Pseudomonadati</taxon>
        <taxon>Pseudomonadota</taxon>
        <taxon>Gammaproteobacteria</taxon>
        <taxon>Alteromonadales</taxon>
        <taxon>Shewanellaceae</taxon>
        <taxon>Shewanella</taxon>
    </lineage>
</organism>
<proteinExistence type="inferred from homology"/>
<accession>B8CNF9</accession>
<gene>
    <name evidence="1" type="primary">rplQ</name>
    <name type="ordered locus">swp_2037</name>
</gene>
<dbReference type="EMBL" id="CP000472">
    <property type="protein sequence ID" value="ACJ28793.1"/>
    <property type="molecule type" value="Genomic_DNA"/>
</dbReference>
<dbReference type="RefSeq" id="WP_012153479.1">
    <property type="nucleotide sequence ID" value="NC_011566.1"/>
</dbReference>
<dbReference type="SMR" id="B8CNF9"/>
<dbReference type="STRING" id="225849.swp_2037"/>
<dbReference type="KEGG" id="swp:swp_2037"/>
<dbReference type="eggNOG" id="COG0203">
    <property type="taxonomic scope" value="Bacteria"/>
</dbReference>
<dbReference type="HOGENOM" id="CLU_074407_2_0_6"/>
<dbReference type="OrthoDB" id="9809073at2"/>
<dbReference type="Proteomes" id="UP000000753">
    <property type="component" value="Chromosome"/>
</dbReference>
<dbReference type="GO" id="GO:0022625">
    <property type="term" value="C:cytosolic large ribosomal subunit"/>
    <property type="evidence" value="ECO:0007669"/>
    <property type="project" value="TreeGrafter"/>
</dbReference>
<dbReference type="GO" id="GO:0003735">
    <property type="term" value="F:structural constituent of ribosome"/>
    <property type="evidence" value="ECO:0007669"/>
    <property type="project" value="InterPro"/>
</dbReference>
<dbReference type="GO" id="GO:0006412">
    <property type="term" value="P:translation"/>
    <property type="evidence" value="ECO:0007669"/>
    <property type="project" value="UniProtKB-UniRule"/>
</dbReference>
<dbReference type="FunFam" id="3.90.1030.10:FF:000001">
    <property type="entry name" value="50S ribosomal protein L17"/>
    <property type="match status" value="1"/>
</dbReference>
<dbReference type="Gene3D" id="3.90.1030.10">
    <property type="entry name" value="Ribosomal protein L17"/>
    <property type="match status" value="1"/>
</dbReference>
<dbReference type="HAMAP" id="MF_01368">
    <property type="entry name" value="Ribosomal_bL17"/>
    <property type="match status" value="1"/>
</dbReference>
<dbReference type="InterPro" id="IPR000456">
    <property type="entry name" value="Ribosomal_bL17"/>
</dbReference>
<dbReference type="InterPro" id="IPR047859">
    <property type="entry name" value="Ribosomal_bL17_CS"/>
</dbReference>
<dbReference type="InterPro" id="IPR036373">
    <property type="entry name" value="Ribosomal_bL17_sf"/>
</dbReference>
<dbReference type="NCBIfam" id="TIGR00059">
    <property type="entry name" value="L17"/>
    <property type="match status" value="1"/>
</dbReference>
<dbReference type="PANTHER" id="PTHR14413:SF16">
    <property type="entry name" value="LARGE RIBOSOMAL SUBUNIT PROTEIN BL17M"/>
    <property type="match status" value="1"/>
</dbReference>
<dbReference type="PANTHER" id="PTHR14413">
    <property type="entry name" value="RIBOSOMAL PROTEIN L17"/>
    <property type="match status" value="1"/>
</dbReference>
<dbReference type="Pfam" id="PF01196">
    <property type="entry name" value="Ribosomal_L17"/>
    <property type="match status" value="1"/>
</dbReference>
<dbReference type="SUPFAM" id="SSF64263">
    <property type="entry name" value="Prokaryotic ribosomal protein L17"/>
    <property type="match status" value="1"/>
</dbReference>
<dbReference type="PROSITE" id="PS01167">
    <property type="entry name" value="RIBOSOMAL_L17"/>
    <property type="match status" value="1"/>
</dbReference>
<evidence type="ECO:0000255" key="1">
    <source>
        <dbReference type="HAMAP-Rule" id="MF_01368"/>
    </source>
</evidence>
<evidence type="ECO:0000305" key="2"/>
<feature type="chain" id="PRO_1000144483" description="Large ribosomal subunit protein bL17">
    <location>
        <begin position="1"/>
        <end position="130"/>
    </location>
</feature>
<keyword id="KW-0687">Ribonucleoprotein</keyword>
<keyword id="KW-0689">Ribosomal protein</keyword>
<comment type="subunit">
    <text evidence="1">Part of the 50S ribosomal subunit. Contacts protein L32.</text>
</comment>
<comment type="similarity">
    <text evidence="1">Belongs to the bacterial ribosomal protein bL17 family.</text>
</comment>
<sequence length="130" mass="14662">MRHRKSGRQLNRNSSHRQAMFRNMACSIVRHEVIKTTVAKAKELRRVVEPLITLAKSDSVANRRLAFARTRDAEVVGKLFTELGPRFQERPGGYTRILKCGLRTGDKAPMAYIELVGRPEAAEAVEDTAE</sequence>
<name>RL17_SHEPW</name>
<protein>
    <recommendedName>
        <fullName evidence="1">Large ribosomal subunit protein bL17</fullName>
    </recommendedName>
    <alternativeName>
        <fullName evidence="2">50S ribosomal protein L17</fullName>
    </alternativeName>
</protein>
<reference key="1">
    <citation type="journal article" date="2008" name="PLoS ONE">
        <title>Environmental adaptation: genomic analysis of the piezotolerant and psychrotolerant deep-sea iron reducing bacterium Shewanella piezotolerans WP3.</title>
        <authorList>
            <person name="Wang F."/>
            <person name="Wang J."/>
            <person name="Jian H."/>
            <person name="Zhang B."/>
            <person name="Li S."/>
            <person name="Wang F."/>
            <person name="Zeng X."/>
            <person name="Gao L."/>
            <person name="Bartlett D.H."/>
            <person name="Yu J."/>
            <person name="Hu S."/>
            <person name="Xiao X."/>
        </authorList>
    </citation>
    <scope>NUCLEOTIDE SEQUENCE [LARGE SCALE GENOMIC DNA]</scope>
    <source>
        <strain>WP3 / JCM 13877</strain>
    </source>
</reference>